<keyword id="KW-1035">Host cytoplasm</keyword>
<keyword id="KW-1048">Host nucleus</keyword>
<keyword id="KW-0945">Host-virus interaction</keyword>
<keyword id="KW-0378">Hydrolase</keyword>
<keyword id="KW-1127">Modulation of host ubiquitin pathway by viral deubiquitinase</keyword>
<keyword id="KW-1130">Modulation of host ubiquitin pathway by virus</keyword>
<keyword id="KW-0645">Protease</keyword>
<keyword id="KW-1185">Reference proteome</keyword>
<keyword id="KW-0677">Repeat</keyword>
<keyword id="KW-0788">Thiol protease</keyword>
<keyword id="KW-0833">Ubl conjugation pathway</keyword>
<keyword id="KW-0946">Virion</keyword>
<keyword id="KW-0920">Virion tegument</keyword>
<comment type="function">
    <text evidence="1">Large tegument protein that plays multiple roles in the viral cycle. During viral entry, remains associated with the capsid while most of the tegument is detached and participates in the capsid transport toward the host nucleus. Plays a role in the routing of the capsid at the nuclear pore complex and subsequent uncoating. Within the host nucleus, acts as a deneddylase and promotes the degradation of nuclear CRLs (cullin-RING ubiquitin ligases) and thereby stabilizes nuclear CRL substrates, while cytoplasmic CRLs remain unaffected. These modifications prevent host cell cycle S-phase progression and create a favorable environment allowing efficient viral genome replication. Participates later in the secondary envelopment of capsids. Indeed, plays a linker role for the association of the outer viral tegument to the capsids together with the inner tegument protein.</text>
</comment>
<comment type="catalytic activity">
    <reaction evidence="1">
        <text>Thiol-dependent hydrolysis of ester, thioester, amide, peptide and isopeptide bonds formed by the C-terminal Gly of ubiquitin (a 76-residue protein attached to proteins as an intracellular targeting signal).</text>
        <dbReference type="EC" id="3.4.19.12"/>
    </reaction>
</comment>
<comment type="subunit">
    <text evidence="1">Interacts with host CUL1 and CUL4A; these interactions inhibit the E3 ligase activity of cullins. Interacts with inner tegument protein. Interacts with capsid vertex specific component CVC2. Interacts with the major capsid protein/MCP.</text>
</comment>
<comment type="subcellular location">
    <subcellularLocation>
        <location evidence="1">Virion tegument</location>
    </subcellularLocation>
    <subcellularLocation>
        <location evidence="1">Host cytoplasm</location>
    </subcellularLocation>
    <subcellularLocation>
        <location evidence="1">Host nucleus</location>
    </subcellularLocation>
    <text evidence="1">Tightly associated with the capsid.</text>
</comment>
<comment type="similarity">
    <text evidence="1">Belongs to the herpesviridae large tegument protein family.</text>
</comment>
<feature type="chain" id="PRO_0000408401" description="Large tegument protein deneddylase">
    <location>
        <begin position="1"/>
        <end position="2077"/>
    </location>
</feature>
<feature type="domain" description="Peptidase C76" evidence="1">
    <location>
        <begin position="3"/>
        <end position="221"/>
    </location>
</feature>
<feature type="region of interest" description="Deubiquitination activity" evidence="1">
    <location>
        <begin position="1"/>
        <end position="231"/>
    </location>
</feature>
<feature type="region of interest" description="Interaction with inner tegument protein" evidence="1">
    <location>
        <position position="287"/>
    </location>
</feature>
<feature type="active site" evidence="1">
    <location>
        <position position="23"/>
    </location>
</feature>
<feature type="active site" evidence="1">
    <location>
        <position position="156"/>
    </location>
</feature>
<feature type="active site" evidence="1">
    <location>
        <position position="158"/>
    </location>
</feature>
<feature type="site" description="Important for catalytic activity" evidence="1">
    <location>
        <position position="10"/>
    </location>
</feature>
<dbReference type="EC" id="3.4.19.12" evidence="1"/>
<dbReference type="EC" id="3.4.22.-" evidence="1"/>
<dbReference type="EMBL" id="AF157706">
    <property type="protein sequence ID" value="AAD49645.1"/>
    <property type="molecule type" value="Genomic_DNA"/>
</dbReference>
<dbReference type="RefSeq" id="NP_050212.1">
    <property type="nucleotide sequence ID" value="NC_000898.1"/>
</dbReference>
<dbReference type="SMR" id="Q9QJ37"/>
<dbReference type="GeneID" id="1497033"/>
<dbReference type="KEGG" id="vg:1497033"/>
<dbReference type="Proteomes" id="UP000006930">
    <property type="component" value="Segment"/>
</dbReference>
<dbReference type="GO" id="GO:0030430">
    <property type="term" value="C:host cell cytoplasm"/>
    <property type="evidence" value="ECO:0007669"/>
    <property type="project" value="UniProtKB-SubCell"/>
</dbReference>
<dbReference type="GO" id="GO:0042025">
    <property type="term" value="C:host cell nucleus"/>
    <property type="evidence" value="ECO:0007669"/>
    <property type="project" value="UniProtKB-SubCell"/>
</dbReference>
<dbReference type="GO" id="GO:0019033">
    <property type="term" value="C:viral tegument"/>
    <property type="evidence" value="ECO:0007669"/>
    <property type="project" value="UniProtKB-SubCell"/>
</dbReference>
<dbReference type="GO" id="GO:0004843">
    <property type="term" value="F:cysteine-type deubiquitinase activity"/>
    <property type="evidence" value="ECO:0007669"/>
    <property type="project" value="UniProtKB-EC"/>
</dbReference>
<dbReference type="GO" id="GO:0006508">
    <property type="term" value="P:proteolysis"/>
    <property type="evidence" value="ECO:0007669"/>
    <property type="project" value="UniProtKB-KW"/>
</dbReference>
<dbReference type="GO" id="GO:0039648">
    <property type="term" value="P:symbiont-mediated perturbation of host ubiquitin-like protein modification"/>
    <property type="evidence" value="ECO:0007669"/>
    <property type="project" value="UniProtKB-KW"/>
</dbReference>
<dbReference type="Gene3D" id="3.90.70.120">
    <property type="match status" value="1"/>
</dbReference>
<dbReference type="HAMAP" id="MF_04044">
    <property type="entry name" value="HSV_LTP"/>
    <property type="match status" value="1"/>
</dbReference>
<dbReference type="InterPro" id="IPR006928">
    <property type="entry name" value="Herpes_teg_USP"/>
</dbReference>
<dbReference type="InterPro" id="IPR034702">
    <property type="entry name" value="HSV_LTP"/>
</dbReference>
<dbReference type="InterPro" id="IPR038765">
    <property type="entry name" value="Papain-like_cys_pep_sf"/>
</dbReference>
<dbReference type="Pfam" id="PF04843">
    <property type="entry name" value="Herpes_teg_N"/>
    <property type="match status" value="1"/>
</dbReference>
<dbReference type="SUPFAM" id="SSF54001">
    <property type="entry name" value="Cysteine proteinases"/>
    <property type="match status" value="1"/>
</dbReference>
<dbReference type="PROSITE" id="PS51521">
    <property type="entry name" value="HTUSP"/>
    <property type="match status" value="1"/>
</dbReference>
<accession>Q9QJ37</accession>
<organismHost>
    <name type="scientific">Homo sapiens</name>
    <name type="common">Human</name>
    <dbReference type="NCBI Taxonomy" id="9606"/>
</organismHost>
<organism>
    <name type="scientific">Human herpesvirus 6B (strain Z29)</name>
    <name type="common">HHV-6 variant B</name>
    <name type="synonym">Human B lymphotropic virus</name>
    <dbReference type="NCBI Taxonomy" id="36351"/>
    <lineage>
        <taxon>Viruses</taxon>
        <taxon>Duplodnaviria</taxon>
        <taxon>Heunggongvirae</taxon>
        <taxon>Peploviricota</taxon>
        <taxon>Herviviricetes</taxon>
        <taxon>Herpesvirales</taxon>
        <taxon>Orthoherpesviridae</taxon>
        <taxon>Betaherpesvirinae</taxon>
        <taxon>Roseolovirus</taxon>
        <taxon>Roseolovirus humanbeta6b</taxon>
        <taxon>Human herpesvirus 6B</taxon>
    </lineage>
</organism>
<name>LTP_HHV6Z</name>
<gene>
    <name type="primary">U31</name>
</gene>
<evidence type="ECO:0000255" key="1">
    <source>
        <dbReference type="HAMAP-Rule" id="MF_04044"/>
    </source>
</evidence>
<sequence length="2077" mass="240285">MKIITSSTNQNDSKYGPRAGKQCMSNSFSFLHTVYLNGINNSLNAGTIDAIMEEGYHLDTASTLALMLDNSDSQDYRLLTEIPRRIHSRYGVTQHELSRPFNGTLDTQKIDNEVYFGLIDFILYGKTKNCPAFAVITIGVLSRAIFFLNNTLYLFDSHPTEREATAAIYICQDIEEAYELLTAHGTEGFYYDASFIFFIETSNLSLSSHDAELLILKTYKDPDIAITLDKFSSTEIHDIKKTDDIGSQQDLVAAKTTYLERAPQKRKKNSHSLELELNDKKKKDTASLTYYATEVDLIPSFYELRSQFQSLFHDLKSFPIMKSQFNWTIYLQDSPMNPNQPFATPFLWNRVFHLLCQIVDVFVGVGSTNDDSSKQKQQTIFINYLLPFKDFSEVFNEALTACQENNLDILLIYNNYLCKTTTFRTLERILLSKFLAIADNEHEKHYEWVKSWTTQMLQEMPKKLDDIENYLKAYVSQNPVKHFHEFVCLNKAEKHNIAVLLNEKRKEIQEDIERDKNIFAQLSNFIDKLGETPALPIESENVHKVHTSDITEAIVPRFMTESIELPNISTLNNTQQLSLEKQISEKLTNTIHTLRNKFTKIVQDNYNNLAAGFMPVTELNCLFAYLVNLYFNIEVLKHSGLNINTELLQEVEKLYDNTQFLRFGTSHFNINNLSNFTLSIRKMFVDFYNSQKPSDRASEILAAIESILADPSKNKTIVNIEMIKSQLEELGKMEISTTENKQTAEITKQILGDQELTPIYDFLHHLSAYNLPNTTTVKNLHLHFILEKRPDIAAILHDKIQSILDICIDDMLNDITVPEQTFSTVLFLVDLFPNSTEKTALFESVLTLRQLAKKCANLKTLEEFDDLAQFITTNSEQLQNMMKQHFGKKIPTLMDHIKFLYSQKIITAEEKNWIQRAKTAVITSPEELTAFLATAPTKHALQTCKPELDKALQRHMEEQMKQTAENDKKHILTIRNTLEKRLNDILLILKDGQFSSLETVHLNLLETFLKQLQDNDLIIHFTHALLPVLKDIETTISKTISDILEKILIKTPLNPEQMSKEEQKYTPLLSFLSKFKKTTFCTEDVKTEIDQMQKSITFLTKIATSTNKYTRISHSVYGQELNLYEERITELKKETNKIKEQLSKEYAVAEKKILLSSQDAKTNKIYLVLNTHTLKEIKNTQFRETAFAKALTVEVNNKENQLQELLNHFNAHLKAKMDQNHITKLSFDTKWTAFVSDSRLYFPDFVDIKLQDFISDPFKVISQLMNKAANEMPYIQAEITLKWLTQLVHDINKFCLSAISEFGKEAIPFNYAALRDLEYQINTKYVEIENKVICNETVENTKNIPKLTKLLKELDPKRVAGGQKQYQTLMNKILTSETSMQQTYEKEQLKKEYFETVNNVASFKLAFNFPKQRQNVERLMEKFKSLPKGQPFEKFPEENDLFSDSLITENYINGLRALLNFITAAQNYIQNTLLKQWAVFQQQNFIPIDYSVANVKPISDLYARLRIERDRQVFYQVNSVFGTQLIVDETGVPLQFHNIFYNAVVKFFSLNYKQIHVPEDTPRLVSSQYKLLSVCKSFIIILQQFWENIITLDLGPYLRDGTQNFKRELIPIVNLKLFIYIITQAWTASEDSTVSTAFELPIKQFTLLILCSHPEYLYGCLSHPTDLVINSLAKSIDKDSLYDTFVVSHNPPEKPMHLMRSICIDTQLWQSAKLMKDTFQQTFFTQLCPQNEKFFIYLTAFLILPYKFLNYIWIQYKPITFTQRSYQNLIKDLCSEYVHQNKITMSSVTPHEPDTIKSGEKITSKITVHKAQNTPTLTRLQAQEYVFDYILYSFLTGYEMTFAMYIDTIEKTYLLCMRHLENVLHDKDFQSVLRARTFDINYILKQSWTKNIVEHSIFSVQLNKIVSYLNHTNRATPNIPLILFNYDNEVVNVYLPPMSTDPKKVAFYIKNPFHFPVQEYEATDLISFHLYPKTTDILNQLPPNKTVSTRPYNLSSETLTTKNLSEPKFKQPTVTGLMPKSQSIILSTDTNVLETSPDIKANTASAAIKDVTLAREQISEFSESINTTLSKLKSLYL</sequence>
<proteinExistence type="inferred from homology"/>
<protein>
    <recommendedName>
        <fullName evidence="1">Large tegument protein deneddylase</fullName>
        <ecNumber evidence="1">3.4.19.12</ecNumber>
        <ecNumber evidence="1">3.4.22.-</ecNumber>
    </recommendedName>
</protein>
<reference key="1">
    <citation type="journal article" date="1999" name="J. Virol.">
        <title>Human herpesvirus 6B genome sequence: coding content and comparison with human herpesvirus 6A.</title>
        <authorList>
            <person name="Dominguez G."/>
            <person name="Dambaugh T.R."/>
            <person name="Stamey F.R."/>
            <person name="Dewhurst S."/>
            <person name="Inoue N."/>
            <person name="Pellett P.E."/>
        </authorList>
    </citation>
    <scope>NUCLEOTIDE SEQUENCE [LARGE SCALE GENOMIC DNA]</scope>
</reference>